<keyword id="KW-0158">Chromosome</keyword>
<keyword id="KW-0903">Direct protein sequencing</keyword>
<keyword id="KW-0238">DNA-binding</keyword>
<keyword id="KW-0539">Nucleus</keyword>
<keyword id="KW-0597">Phosphoprotein</keyword>
<dbReference type="PIR" id="JU0038">
    <property type="entry name" value="JU0038"/>
</dbReference>
<dbReference type="SMR" id="P40625"/>
<dbReference type="iPTMnet" id="P40625"/>
<dbReference type="GO" id="GO:0005694">
    <property type="term" value="C:chromosome"/>
    <property type="evidence" value="ECO:0007669"/>
    <property type="project" value="UniProtKB-SubCell"/>
</dbReference>
<dbReference type="GO" id="GO:0005634">
    <property type="term" value="C:nucleus"/>
    <property type="evidence" value="ECO:0007669"/>
    <property type="project" value="UniProtKB-SubCell"/>
</dbReference>
<dbReference type="GO" id="GO:0003677">
    <property type="term" value="F:DNA binding"/>
    <property type="evidence" value="ECO:0007669"/>
    <property type="project" value="UniProtKB-KW"/>
</dbReference>
<dbReference type="Gene3D" id="1.10.30.10">
    <property type="entry name" value="High mobility group box domain"/>
    <property type="match status" value="1"/>
</dbReference>
<dbReference type="InterPro" id="IPR009071">
    <property type="entry name" value="HMG_box_dom"/>
</dbReference>
<dbReference type="InterPro" id="IPR036910">
    <property type="entry name" value="HMG_box_dom_sf"/>
</dbReference>
<dbReference type="InterPro" id="IPR050342">
    <property type="entry name" value="HMGB"/>
</dbReference>
<dbReference type="PANTHER" id="PTHR48112:SF32">
    <property type="entry name" value="HIGH MOBILITY GROUP PROTEIN B3"/>
    <property type="match status" value="1"/>
</dbReference>
<dbReference type="PANTHER" id="PTHR48112">
    <property type="entry name" value="HIGH MOBILITY GROUP PROTEIN DSP1"/>
    <property type="match status" value="1"/>
</dbReference>
<dbReference type="Pfam" id="PF00505">
    <property type="entry name" value="HMG_box"/>
    <property type="match status" value="1"/>
</dbReference>
<dbReference type="PRINTS" id="PR00886">
    <property type="entry name" value="HIGHMOBLTY12"/>
</dbReference>
<dbReference type="SMART" id="SM00398">
    <property type="entry name" value="HMG"/>
    <property type="match status" value="1"/>
</dbReference>
<dbReference type="SUPFAM" id="SSF47095">
    <property type="entry name" value="HMG-box"/>
    <property type="match status" value="1"/>
</dbReference>
<dbReference type="PROSITE" id="PS50118">
    <property type="entry name" value="HMG_BOX_2"/>
    <property type="match status" value="1"/>
</dbReference>
<reference key="1">
    <citation type="journal article" date="1989" name="J. Biochem.">
        <title>Tetrahymena HMG nonhistone chromosomal protein. Isolation and amino acid sequence lacking the N- and C-terminal domains of vertebrate HMG 1.</title>
        <authorList>
            <person name="Hayashi T."/>
            <person name="Hayashi H."/>
            <person name="Iwai K."/>
        </authorList>
    </citation>
    <scope>PROTEIN SEQUENCE</scope>
    <scope>PHOSPHORYLATION AT SER-16; THR-42 AND SER-43</scope>
    <source>
        <strain>GL</strain>
    </source>
</reference>
<organism>
    <name type="scientific">Tetrahymena pyriformis</name>
    <dbReference type="NCBI Taxonomy" id="5908"/>
    <lineage>
        <taxon>Eukaryota</taxon>
        <taxon>Sar</taxon>
        <taxon>Alveolata</taxon>
        <taxon>Ciliophora</taxon>
        <taxon>Intramacronucleata</taxon>
        <taxon>Oligohymenophorea</taxon>
        <taxon>Hymenostomatida</taxon>
        <taxon>Tetrahymenina</taxon>
        <taxon>Tetrahymenidae</taxon>
        <taxon>Tetrahymena</taxon>
    </lineage>
</organism>
<proteinExistence type="evidence at protein level"/>
<protein>
    <recommendedName>
        <fullName>High mobility group protein</fullName>
    </recommendedName>
    <alternativeName>
        <fullName>Non-histone chromosomal protein</fullName>
    </alternativeName>
</protein>
<gene>
    <name type="primary">HMG</name>
</gene>
<evidence type="ECO:0000255" key="1">
    <source>
        <dbReference type="PROSITE-ProRule" id="PRU00267"/>
    </source>
</evidence>
<evidence type="ECO:0000269" key="2">
    <source>
    </source>
</evidence>
<evidence type="ECO:0000305" key="3">
    <source>
    </source>
</evidence>
<sequence>GKVKDDKPAPPKRPLSAFFLFKQHNYDQVKKENPNAKITELTSMIAEKWKHVTEKEKKKYEGLQQEAKAKYEKDMQAYEKKYGKPEKVKKIKKSKKGSK</sequence>
<comment type="subcellular location">
    <subcellularLocation>
        <location>Nucleus</location>
    </subcellularLocation>
    <subcellularLocation>
        <location>Chromosome</location>
    </subcellularLocation>
</comment>
<comment type="PTM">
    <text evidence="2">Phosphorylated at two positions (Ser-16 and Thr-42 or Ser-43), each 6-7%.</text>
</comment>
<name>HMG_TETPY</name>
<accession>P40625</accession>
<feature type="chain" id="PRO_0000048560" description="High mobility group protein">
    <location>
        <begin position="1"/>
        <end position="99"/>
    </location>
</feature>
<feature type="DNA-binding region" description="HMG box" evidence="1">
    <location>
        <begin position="11"/>
        <end position="79"/>
    </location>
</feature>
<feature type="modified residue" description="Phosphoserine" evidence="2">
    <location>
        <position position="16"/>
    </location>
</feature>
<feature type="modified residue" description="Phosphothreonine" evidence="3">
    <location>
        <position position="42"/>
    </location>
</feature>
<feature type="modified residue" description="Phosphoserine" evidence="3">
    <location>
        <position position="43"/>
    </location>
</feature>